<keyword id="KW-0967">Endosome</keyword>
<keyword id="KW-0325">Glycoprotein</keyword>
<keyword id="KW-0458">Lysosome</keyword>
<keyword id="KW-0472">Membrane</keyword>
<keyword id="KW-0597">Phosphoprotein</keyword>
<keyword id="KW-0653">Protein transport</keyword>
<keyword id="KW-1267">Proteomics identification</keyword>
<keyword id="KW-1185">Reference proteome</keyword>
<keyword id="KW-0732">Signal</keyword>
<keyword id="KW-0812">Transmembrane</keyword>
<keyword id="KW-1133">Transmembrane helix</keyword>
<keyword id="KW-0813">Transport</keyword>
<gene>
    <name evidence="9" type="primary">TMEM9</name>
    <name evidence="6" type="synonym">DERP4</name>
    <name type="synonym">TMEM9A</name>
    <name type="ORF">HSPC186</name>
    <name type="ORF">PSEC0012</name>
    <name type="ORF">UNQ631/PRO1248</name>
</gene>
<evidence type="ECO:0000255" key="1"/>
<evidence type="ECO:0000269" key="2">
    <source>
    </source>
</evidence>
<evidence type="ECO:0000269" key="3">
    <source>
    </source>
</evidence>
<evidence type="ECO:0000269" key="4">
    <source>
    </source>
</evidence>
<evidence type="ECO:0000303" key="5">
    <source>
    </source>
</evidence>
<evidence type="ECO:0000303" key="6">
    <source ref="2"/>
</evidence>
<evidence type="ECO:0000305" key="7"/>
<evidence type="ECO:0000305" key="8">
    <source>
    </source>
</evidence>
<evidence type="ECO:0000312" key="9">
    <source>
        <dbReference type="HGNC" id="HGNC:18823"/>
    </source>
</evidence>
<evidence type="ECO:0007744" key="10">
    <source>
    </source>
</evidence>
<evidence type="ECO:0007744" key="11">
    <source>
    </source>
</evidence>
<evidence type="ECO:0007744" key="12">
    <source>
    </source>
</evidence>
<evidence type="ECO:0007744" key="13">
    <source>
    </source>
</evidence>
<evidence type="ECO:0007744" key="14">
    <source>
    </source>
</evidence>
<proteinExistence type="evidence at protein level"/>
<sequence>MKLLSLVAVVGCLLVPPAEANKSSEDIRCKCICPPYRNISGHIYNQNVSQKDCNCLHVVEPMPVPGHDVEAYCLLCECRYEERSTTTIKVIIVIYLSVVGALLLYMAFLMLVDPLIRKPDAYTEQLHNEEENEDARSMAAAAASLGGPRANTVLERVEGAQQRWKLQVQEQRKTVFDRHKMLS</sequence>
<feature type="signal peptide" evidence="1">
    <location>
        <begin position="1"/>
        <end position="20"/>
    </location>
</feature>
<feature type="chain" id="PRO_0000034374" description="Proton-transporting V-type ATPase complex assembly regulator TMEM9">
    <location>
        <begin position="21"/>
        <end position="183"/>
    </location>
</feature>
<feature type="topological domain" description="Extracellular" evidence="1">
    <location>
        <begin position="21"/>
        <end position="89"/>
    </location>
</feature>
<feature type="transmembrane region" description="Helical" evidence="1">
    <location>
        <begin position="90"/>
        <end position="110"/>
    </location>
</feature>
<feature type="topological domain" description="Cytoplasmic" evidence="1">
    <location>
        <begin position="111"/>
        <end position="183"/>
    </location>
</feature>
<feature type="modified residue" description="Phosphoserine" evidence="10 11 12 13 14">
    <location>
        <position position="137"/>
    </location>
</feature>
<feature type="modified residue" description="Phosphoserine" evidence="14">
    <location>
        <position position="144"/>
    </location>
</feature>
<feature type="glycosylation site" description="N-linked (GlcNAc...) asparagine" evidence="1">
    <location>
        <position position="21"/>
    </location>
</feature>
<feature type="glycosylation site" description="N-linked (GlcNAc...) asparagine" evidence="1">
    <location>
        <position position="38"/>
    </location>
</feature>
<feature type="glycosylation site" description="N-linked (GlcNAc...) asparagine" evidence="1">
    <location>
        <position position="47"/>
    </location>
</feature>
<feature type="sequence conflict" description="In Ref. 6; BAB70820." evidence="7" ref="6">
    <original>K</original>
    <variation>KVRE</variation>
    <location>
        <position position="22"/>
    </location>
</feature>
<feature type="sequence conflict" description="In Ref. 4; CAB66535." evidence="7" ref="4">
    <original>C</original>
    <variation>CCS</variation>
    <location>
        <position position="53"/>
    </location>
</feature>
<protein>
    <recommendedName>
        <fullName evidence="8">Proton-transporting V-type ATPase complex assembly regulator TMEM9</fullName>
        <shortName evidence="8">v-ATPase assembly regulator TMEM9</shortName>
    </recommendedName>
    <alternativeName>
        <fullName evidence="6">Dermal papilla-derived protein 4</fullName>
    </alternativeName>
    <alternativeName>
        <fullName evidence="5">Transmembrane protein 9</fullName>
        <shortName evidence="5">Protein TMEM9</shortName>
    </alternativeName>
</protein>
<organism>
    <name type="scientific">Homo sapiens</name>
    <name type="common">Human</name>
    <dbReference type="NCBI Taxonomy" id="9606"/>
    <lineage>
        <taxon>Eukaryota</taxon>
        <taxon>Metazoa</taxon>
        <taxon>Chordata</taxon>
        <taxon>Craniata</taxon>
        <taxon>Vertebrata</taxon>
        <taxon>Euteleostomi</taxon>
        <taxon>Mammalia</taxon>
        <taxon>Eutheria</taxon>
        <taxon>Euarchontoglires</taxon>
        <taxon>Primates</taxon>
        <taxon>Haplorrhini</taxon>
        <taxon>Catarrhini</taxon>
        <taxon>Hominidae</taxon>
        <taxon>Homo</taxon>
    </lineage>
</organism>
<accession>Q9P0T7</accession>
<accession>B1ALM6</accession>
<accession>Q96NQ9</accession>
<accession>Q9BQF5</accession>
<comment type="function">
    <text evidence="3 4">Transmembrane protein that binds to and facilitates the assembly of lysosomal proton-transporting V-type ATPase (v-ATPase), resulting in enhanced lysosomal acidification and trafficking (PubMed:30374053). By bringing the v-ATPase accessory protein ATP6AP2 and the v-ATPase subunit ATP6V0D1 together, allows v-ATPase complex formation and activation (PubMed:30374053). TMEM9-controlled vesicular acidification induces hyperactivation of Wnt/beta-catenin signaling, involved in development, tissue homeostasis and tissue regeneration, through lysosomal degradation of adenomatous polyposis coli/APC (PubMed:30374053, PubMed:32380568). In the liver, involved in hepatic regeneration (PubMed:32380568).</text>
</comment>
<comment type="subunit">
    <text evidence="3">Interacts with the v-ATPase accessory protein ATP6AP2 and with the v-ATPase complex subunit ATP6V0D1; these interactions lead to the assembly of the v-ATPase complex.</text>
</comment>
<comment type="interaction">
    <interactant intactId="EBI-723976">
        <id>Q9P0T7</id>
    </interactant>
    <interactant intactId="EBI-721179">
        <id>P27449</id>
        <label>ATP6V0C</label>
    </interactant>
    <organismsDiffer>false</organismsDiffer>
    <experiments>3</experiments>
</comment>
<comment type="interaction">
    <interactant intactId="EBI-723976">
        <id>Q9P0T7</id>
    </interactant>
    <interactant intactId="EBI-12822627">
        <id>O14523</id>
        <label>C2CD2L</label>
    </interactant>
    <organismsDiffer>false</organismsDiffer>
    <experiments>3</experiments>
</comment>
<comment type="interaction">
    <interactant intactId="EBI-723976">
        <id>Q9P0T7</id>
    </interactant>
    <interactant intactId="EBI-723889">
        <id>O95832</id>
        <label>CLDN1</label>
    </interactant>
    <organismsDiffer>false</organismsDiffer>
    <experiments>3</experiments>
</comment>
<comment type="interaction">
    <interactant intactId="EBI-723976">
        <id>Q9P0T7</id>
    </interactant>
    <interactant intactId="EBI-13372810">
        <id>P78369</id>
        <label>CLDN10</label>
    </interactant>
    <organismsDiffer>false</organismsDiffer>
    <experiments>3</experiments>
</comment>
<comment type="interaction">
    <interactant intactId="EBI-723976">
        <id>Q9P0T7</id>
    </interactant>
    <interactant intactId="EBI-4319440">
        <id>P54849</id>
        <label>EMP1</label>
    </interactant>
    <organismsDiffer>false</organismsDiffer>
    <experiments>3</experiments>
</comment>
<comment type="interaction">
    <interactant intactId="EBI-723976">
        <id>Q9P0T7</id>
    </interactant>
    <interactant intactId="EBI-10317425">
        <id>Q9NZG7</id>
        <label>NINJ2</label>
    </interactant>
    <organismsDiffer>false</organismsDiffer>
    <experiments>3</experiments>
</comment>
<comment type="interaction">
    <interactant intactId="EBI-723976">
        <id>Q9P0T7</id>
    </interactant>
    <interactant intactId="EBI-12092917">
        <id>Q9UHJ9-5</id>
        <label>PGAP2</label>
    </interactant>
    <organismsDiffer>false</organismsDiffer>
    <experiments>3</experiments>
</comment>
<comment type="interaction">
    <interactant intactId="EBI-723976">
        <id>Q9P0T7</id>
    </interactant>
    <interactant intactId="EBI-10262251">
        <id>Q8IWU4</id>
        <label>SLC30A8</label>
    </interactant>
    <organismsDiffer>false</organismsDiffer>
    <experiments>3</experiments>
</comment>
<comment type="interaction">
    <interactant intactId="EBI-723976">
        <id>Q9P0T7</id>
    </interactant>
    <interactant intactId="EBI-2695795">
        <id>O43752</id>
        <label>STX6</label>
    </interactant>
    <organismsDiffer>false</organismsDiffer>
    <experiments>4</experiments>
</comment>
<comment type="interaction">
    <interactant intactId="EBI-723976">
        <id>Q9P0T7</id>
    </interactant>
    <interactant intactId="EBI-2844246">
        <id>Q9NV12</id>
        <label>TMEM140</label>
    </interactant>
    <organismsDiffer>false</organismsDiffer>
    <experiments>3</experiments>
</comment>
<comment type="interaction">
    <interactant intactId="EBI-723976">
        <id>Q9P0T7</id>
    </interactant>
    <interactant intactId="EBI-2852148">
        <id>Q9H2L4</id>
        <label>TMEM60</label>
    </interactant>
    <organismsDiffer>false</organismsDiffer>
    <experiments>3</experiments>
</comment>
<comment type="interaction">
    <interactant intactId="EBI-723976">
        <id>Q9P0T7</id>
    </interactant>
    <interactant intactId="EBI-6623146">
        <id>P30536</id>
        <label>TSPO</label>
    </interactant>
    <organismsDiffer>false</organismsDiffer>
    <experiments>3</experiments>
</comment>
<comment type="interaction">
    <interactant intactId="EBI-723976">
        <id>Q9P0T7</id>
    </interactant>
    <interactant intactId="EBI-11988865">
        <id>A5PKU2</id>
        <label>TUSC5</label>
    </interactant>
    <organismsDiffer>false</organismsDiffer>
    <experiments>3</experiments>
</comment>
<comment type="subcellular location">
    <subcellularLocation>
        <location evidence="2 8">Lysosome membrane</location>
        <topology evidence="1">Single-pass type I membrane protein</topology>
    </subcellularLocation>
    <subcellularLocation>
        <location evidence="2 3">Late endosome membrane</location>
        <topology evidence="1">Single-pass type I membrane protein</topology>
    </subcellularLocation>
    <subcellularLocation>
        <location evidence="3">Endosome</location>
        <location evidence="3">Multivesicular body membrane</location>
        <topology evidence="1">Single-pass type I membrane protein</topology>
    </subcellularLocation>
</comment>
<comment type="tissue specificity">
    <text evidence="2 3">Highly expressed in adrenal gland, thyroid gland, testis, ovary and prostate (PubMed:12359240). Moderate expression in trachea, spinal cord, stomach, colon, small intestine and spleen (PubMed:12359240, PubMed:30374053). Low expression in bone marrow, lymph node, thymus and peripheral blood lymphocytes (PubMed:12359240). Expression is detected in hematopoietic cell lines including those of myeloid, erythroid, B- and T-cell origin (PubMed:12359240).</text>
</comment>
<comment type="domain">
    <text evidence="3">The transmembrane domain (TMD) is essential for the interaction with ATP6AP2.</text>
</comment>
<comment type="PTM">
    <text evidence="2">N-glycosylated.</text>
</comment>
<comment type="similarity">
    <text evidence="7">Belongs to the TMEM9 family.</text>
</comment>
<reference key="1">
    <citation type="journal article" date="2002" name="Biochem. Biophys. Res. Commun.">
        <title>Characterization of the novel human transmembrane protein 9 (TMEM9) that localizes to lysosomes and late endosomes.</title>
        <authorList>
            <person name="Kveine M."/>
            <person name="Tenstad E."/>
            <person name="Dosen G."/>
            <person name="Funderud S."/>
            <person name="Rian E."/>
        </authorList>
    </citation>
    <scope>NUCLEOTIDE SEQUENCE [MRNA]</scope>
    <scope>SUBCELLULAR LOCATION</scope>
    <scope>TISSUE SPECIFICITY</scope>
    <scope>GLYCOSYLATIONS AT ASN-21; ASN-38 AND ASN-47</scope>
</reference>
<reference key="2">
    <citation type="submission" date="1998-05" db="EMBL/GenBank/DDBJ databases">
        <title>Molecular cloning of a dermal papilla derived gene.</title>
        <authorList>
            <person name="Ikeda A."/>
            <person name="Yoshimoto M."/>
        </authorList>
    </citation>
    <scope>NUCLEOTIDE SEQUENCE [MRNA]</scope>
    <source>
        <tissue>Hair follicle dermal papilla</tissue>
    </source>
</reference>
<reference key="3">
    <citation type="journal article" date="2000" name="Genome Res.">
        <title>Cloning and functional analysis of cDNAs with open reading frames for 300 previously undefined genes expressed in CD34+ hematopoietic stem/progenitor cells.</title>
        <authorList>
            <person name="Zhang Q.-H."/>
            <person name="Ye M."/>
            <person name="Wu X.-Y."/>
            <person name="Ren S.-X."/>
            <person name="Zhao M."/>
            <person name="Zhao C.-J."/>
            <person name="Fu G."/>
            <person name="Shen Y."/>
            <person name="Fan H.-Y."/>
            <person name="Lu G."/>
            <person name="Zhong M."/>
            <person name="Xu X.-R."/>
            <person name="Han Z.-G."/>
            <person name="Zhang J.-W."/>
            <person name="Tao J."/>
            <person name="Huang Q.-H."/>
            <person name="Zhou J."/>
            <person name="Hu G.-X."/>
            <person name="Gu J."/>
            <person name="Chen S.-J."/>
            <person name="Chen Z."/>
        </authorList>
    </citation>
    <scope>NUCLEOTIDE SEQUENCE [LARGE SCALE MRNA]</scope>
    <source>
        <tissue>Umbilical cord blood</tissue>
    </source>
</reference>
<reference key="4">
    <citation type="journal article" date="2001" name="Genome Res.">
        <title>Towards a catalog of human genes and proteins: sequencing and analysis of 500 novel complete protein coding human cDNAs.</title>
        <authorList>
            <person name="Wiemann S."/>
            <person name="Weil B."/>
            <person name="Wellenreuther R."/>
            <person name="Gassenhuber J."/>
            <person name="Glassl S."/>
            <person name="Ansorge W."/>
            <person name="Boecher M."/>
            <person name="Bloecker H."/>
            <person name="Bauersachs S."/>
            <person name="Blum H."/>
            <person name="Lauber J."/>
            <person name="Duesterhoeft A."/>
            <person name="Beyer A."/>
            <person name="Koehrer K."/>
            <person name="Strack N."/>
            <person name="Mewes H.-W."/>
            <person name="Ottenwaelder B."/>
            <person name="Obermaier B."/>
            <person name="Tampe J."/>
            <person name="Heubner D."/>
            <person name="Wambutt R."/>
            <person name="Korn B."/>
            <person name="Klein M."/>
            <person name="Poustka A."/>
        </authorList>
    </citation>
    <scope>NUCLEOTIDE SEQUENCE [LARGE SCALE MRNA]</scope>
    <source>
        <tissue>Brain</tissue>
    </source>
</reference>
<reference key="5">
    <citation type="journal article" date="2003" name="Genome Res.">
        <title>The secreted protein discovery initiative (SPDI), a large-scale effort to identify novel human secreted and transmembrane proteins: a bioinformatics assessment.</title>
        <authorList>
            <person name="Clark H.F."/>
            <person name="Gurney A.L."/>
            <person name="Abaya E."/>
            <person name="Baker K."/>
            <person name="Baldwin D.T."/>
            <person name="Brush J."/>
            <person name="Chen J."/>
            <person name="Chow B."/>
            <person name="Chui C."/>
            <person name="Crowley C."/>
            <person name="Currell B."/>
            <person name="Deuel B."/>
            <person name="Dowd P."/>
            <person name="Eaton D."/>
            <person name="Foster J.S."/>
            <person name="Grimaldi C."/>
            <person name="Gu Q."/>
            <person name="Hass P.E."/>
            <person name="Heldens S."/>
            <person name="Huang A."/>
            <person name="Kim H.S."/>
            <person name="Klimowski L."/>
            <person name="Jin Y."/>
            <person name="Johnson S."/>
            <person name="Lee J."/>
            <person name="Lewis L."/>
            <person name="Liao D."/>
            <person name="Mark M.R."/>
            <person name="Robbie E."/>
            <person name="Sanchez C."/>
            <person name="Schoenfeld J."/>
            <person name="Seshagiri S."/>
            <person name="Simmons L."/>
            <person name="Singh J."/>
            <person name="Smith V."/>
            <person name="Stinson J."/>
            <person name="Vagts A."/>
            <person name="Vandlen R.L."/>
            <person name="Watanabe C."/>
            <person name="Wieand D."/>
            <person name="Woods K."/>
            <person name="Xie M.-H."/>
            <person name="Yansura D.G."/>
            <person name="Yi S."/>
            <person name="Yu G."/>
            <person name="Yuan J."/>
            <person name="Zhang M."/>
            <person name="Zhang Z."/>
            <person name="Goddard A.D."/>
            <person name="Wood W.I."/>
            <person name="Godowski P.J."/>
            <person name="Gray A.M."/>
        </authorList>
    </citation>
    <scope>NUCLEOTIDE SEQUENCE [LARGE SCALE MRNA]</scope>
</reference>
<reference key="6">
    <citation type="journal article" date="2004" name="Nat. Genet.">
        <title>Complete sequencing and characterization of 21,243 full-length human cDNAs.</title>
        <authorList>
            <person name="Ota T."/>
            <person name="Suzuki Y."/>
            <person name="Nishikawa T."/>
            <person name="Otsuki T."/>
            <person name="Sugiyama T."/>
            <person name="Irie R."/>
            <person name="Wakamatsu A."/>
            <person name="Hayashi K."/>
            <person name="Sato H."/>
            <person name="Nagai K."/>
            <person name="Kimura K."/>
            <person name="Makita H."/>
            <person name="Sekine M."/>
            <person name="Obayashi M."/>
            <person name="Nishi T."/>
            <person name="Shibahara T."/>
            <person name="Tanaka T."/>
            <person name="Ishii S."/>
            <person name="Yamamoto J."/>
            <person name="Saito K."/>
            <person name="Kawai Y."/>
            <person name="Isono Y."/>
            <person name="Nakamura Y."/>
            <person name="Nagahari K."/>
            <person name="Murakami K."/>
            <person name="Yasuda T."/>
            <person name="Iwayanagi T."/>
            <person name="Wagatsuma M."/>
            <person name="Shiratori A."/>
            <person name="Sudo H."/>
            <person name="Hosoiri T."/>
            <person name="Kaku Y."/>
            <person name="Kodaira H."/>
            <person name="Kondo H."/>
            <person name="Sugawara M."/>
            <person name="Takahashi M."/>
            <person name="Kanda K."/>
            <person name="Yokoi T."/>
            <person name="Furuya T."/>
            <person name="Kikkawa E."/>
            <person name="Omura Y."/>
            <person name="Abe K."/>
            <person name="Kamihara K."/>
            <person name="Katsuta N."/>
            <person name="Sato K."/>
            <person name="Tanikawa M."/>
            <person name="Yamazaki M."/>
            <person name="Ninomiya K."/>
            <person name="Ishibashi T."/>
            <person name="Yamashita H."/>
            <person name="Murakawa K."/>
            <person name="Fujimori K."/>
            <person name="Tanai H."/>
            <person name="Kimata M."/>
            <person name="Watanabe M."/>
            <person name="Hiraoka S."/>
            <person name="Chiba Y."/>
            <person name="Ishida S."/>
            <person name="Ono Y."/>
            <person name="Takiguchi S."/>
            <person name="Watanabe S."/>
            <person name="Yosida M."/>
            <person name="Hotuta T."/>
            <person name="Kusano J."/>
            <person name="Kanehori K."/>
            <person name="Takahashi-Fujii A."/>
            <person name="Hara H."/>
            <person name="Tanase T.-O."/>
            <person name="Nomura Y."/>
            <person name="Togiya S."/>
            <person name="Komai F."/>
            <person name="Hara R."/>
            <person name="Takeuchi K."/>
            <person name="Arita M."/>
            <person name="Imose N."/>
            <person name="Musashino K."/>
            <person name="Yuuki H."/>
            <person name="Oshima A."/>
            <person name="Sasaki N."/>
            <person name="Aotsuka S."/>
            <person name="Yoshikawa Y."/>
            <person name="Matsunawa H."/>
            <person name="Ichihara T."/>
            <person name="Shiohata N."/>
            <person name="Sano S."/>
            <person name="Moriya S."/>
            <person name="Momiyama H."/>
            <person name="Satoh N."/>
            <person name="Takami S."/>
            <person name="Terashima Y."/>
            <person name="Suzuki O."/>
            <person name="Nakagawa S."/>
            <person name="Senoh A."/>
            <person name="Mizoguchi H."/>
            <person name="Goto Y."/>
            <person name="Shimizu F."/>
            <person name="Wakebe H."/>
            <person name="Hishigaki H."/>
            <person name="Watanabe T."/>
            <person name="Sugiyama A."/>
            <person name="Takemoto M."/>
            <person name="Kawakami B."/>
            <person name="Yamazaki M."/>
            <person name="Watanabe K."/>
            <person name="Kumagai A."/>
            <person name="Itakura S."/>
            <person name="Fukuzumi Y."/>
            <person name="Fujimori Y."/>
            <person name="Komiyama M."/>
            <person name="Tashiro H."/>
            <person name="Tanigami A."/>
            <person name="Fujiwara T."/>
            <person name="Ono T."/>
            <person name="Yamada K."/>
            <person name="Fujii Y."/>
            <person name="Ozaki K."/>
            <person name="Hirao M."/>
            <person name="Ohmori Y."/>
            <person name="Kawabata A."/>
            <person name="Hikiji T."/>
            <person name="Kobatake N."/>
            <person name="Inagaki H."/>
            <person name="Ikema Y."/>
            <person name="Okamoto S."/>
            <person name="Okitani R."/>
            <person name="Kawakami T."/>
            <person name="Noguchi S."/>
            <person name="Itoh T."/>
            <person name="Shigeta K."/>
            <person name="Senba T."/>
            <person name="Matsumura K."/>
            <person name="Nakajima Y."/>
            <person name="Mizuno T."/>
            <person name="Morinaga M."/>
            <person name="Sasaki M."/>
            <person name="Togashi T."/>
            <person name="Oyama M."/>
            <person name="Hata H."/>
            <person name="Watanabe M."/>
            <person name="Komatsu T."/>
            <person name="Mizushima-Sugano J."/>
            <person name="Satoh T."/>
            <person name="Shirai Y."/>
            <person name="Takahashi Y."/>
            <person name="Nakagawa K."/>
            <person name="Okumura K."/>
            <person name="Nagase T."/>
            <person name="Nomura N."/>
            <person name="Kikuchi H."/>
            <person name="Masuho Y."/>
            <person name="Yamashita R."/>
            <person name="Nakai K."/>
            <person name="Yada T."/>
            <person name="Nakamura Y."/>
            <person name="Ohara O."/>
            <person name="Isogai T."/>
            <person name="Sugano S."/>
        </authorList>
    </citation>
    <scope>NUCLEOTIDE SEQUENCE [LARGE SCALE MRNA]</scope>
    <source>
        <tissue>Cerebellum</tissue>
    </source>
</reference>
<reference key="7">
    <citation type="journal article" date="2005" name="DNA Res.">
        <title>Signal sequence and keyword trap in silico for selection of full-length human cDNAs encoding secretion or membrane proteins from oligo-capped cDNA libraries.</title>
        <authorList>
            <person name="Otsuki T."/>
            <person name="Ota T."/>
            <person name="Nishikawa T."/>
            <person name="Hayashi K."/>
            <person name="Suzuki Y."/>
            <person name="Yamamoto J."/>
            <person name="Wakamatsu A."/>
            <person name="Kimura K."/>
            <person name="Sakamoto K."/>
            <person name="Hatano N."/>
            <person name="Kawai Y."/>
            <person name="Ishii S."/>
            <person name="Saito K."/>
            <person name="Kojima S."/>
            <person name="Sugiyama T."/>
            <person name="Ono T."/>
            <person name="Okano K."/>
            <person name="Yoshikawa Y."/>
            <person name="Aotsuka S."/>
            <person name="Sasaki N."/>
            <person name="Hattori A."/>
            <person name="Okumura K."/>
            <person name="Nagai K."/>
            <person name="Sugano S."/>
            <person name="Isogai T."/>
        </authorList>
    </citation>
    <scope>NUCLEOTIDE SEQUENCE [LARGE SCALE MRNA]</scope>
    <source>
        <tissue>Teratocarcinoma</tissue>
    </source>
</reference>
<reference key="8">
    <citation type="journal article" date="2006" name="Nature">
        <title>The DNA sequence and biological annotation of human chromosome 1.</title>
        <authorList>
            <person name="Gregory S.G."/>
            <person name="Barlow K.F."/>
            <person name="McLay K.E."/>
            <person name="Kaul R."/>
            <person name="Swarbreck D."/>
            <person name="Dunham A."/>
            <person name="Scott C.E."/>
            <person name="Howe K.L."/>
            <person name="Woodfine K."/>
            <person name="Spencer C.C.A."/>
            <person name="Jones M.C."/>
            <person name="Gillson C."/>
            <person name="Searle S."/>
            <person name="Zhou Y."/>
            <person name="Kokocinski F."/>
            <person name="McDonald L."/>
            <person name="Evans R."/>
            <person name="Phillips K."/>
            <person name="Atkinson A."/>
            <person name="Cooper R."/>
            <person name="Jones C."/>
            <person name="Hall R.E."/>
            <person name="Andrews T.D."/>
            <person name="Lloyd C."/>
            <person name="Ainscough R."/>
            <person name="Almeida J.P."/>
            <person name="Ambrose K.D."/>
            <person name="Anderson F."/>
            <person name="Andrew R.W."/>
            <person name="Ashwell R.I.S."/>
            <person name="Aubin K."/>
            <person name="Babbage A.K."/>
            <person name="Bagguley C.L."/>
            <person name="Bailey J."/>
            <person name="Beasley H."/>
            <person name="Bethel G."/>
            <person name="Bird C.P."/>
            <person name="Bray-Allen S."/>
            <person name="Brown J.Y."/>
            <person name="Brown A.J."/>
            <person name="Buckley D."/>
            <person name="Burton J."/>
            <person name="Bye J."/>
            <person name="Carder C."/>
            <person name="Chapman J.C."/>
            <person name="Clark S.Y."/>
            <person name="Clarke G."/>
            <person name="Clee C."/>
            <person name="Cobley V."/>
            <person name="Collier R.E."/>
            <person name="Corby N."/>
            <person name="Coville G.J."/>
            <person name="Davies J."/>
            <person name="Deadman R."/>
            <person name="Dunn M."/>
            <person name="Earthrowl M."/>
            <person name="Ellington A.G."/>
            <person name="Errington H."/>
            <person name="Frankish A."/>
            <person name="Frankland J."/>
            <person name="French L."/>
            <person name="Garner P."/>
            <person name="Garnett J."/>
            <person name="Gay L."/>
            <person name="Ghori M.R.J."/>
            <person name="Gibson R."/>
            <person name="Gilby L.M."/>
            <person name="Gillett W."/>
            <person name="Glithero R.J."/>
            <person name="Grafham D.V."/>
            <person name="Griffiths C."/>
            <person name="Griffiths-Jones S."/>
            <person name="Grocock R."/>
            <person name="Hammond S."/>
            <person name="Harrison E.S.I."/>
            <person name="Hart E."/>
            <person name="Haugen E."/>
            <person name="Heath P.D."/>
            <person name="Holmes S."/>
            <person name="Holt K."/>
            <person name="Howden P.J."/>
            <person name="Hunt A.R."/>
            <person name="Hunt S.E."/>
            <person name="Hunter G."/>
            <person name="Isherwood J."/>
            <person name="James R."/>
            <person name="Johnson C."/>
            <person name="Johnson D."/>
            <person name="Joy A."/>
            <person name="Kay M."/>
            <person name="Kershaw J.K."/>
            <person name="Kibukawa M."/>
            <person name="Kimberley A.M."/>
            <person name="King A."/>
            <person name="Knights A.J."/>
            <person name="Lad H."/>
            <person name="Laird G."/>
            <person name="Lawlor S."/>
            <person name="Leongamornlert D.A."/>
            <person name="Lloyd D.M."/>
            <person name="Loveland J."/>
            <person name="Lovell J."/>
            <person name="Lush M.J."/>
            <person name="Lyne R."/>
            <person name="Martin S."/>
            <person name="Mashreghi-Mohammadi M."/>
            <person name="Matthews L."/>
            <person name="Matthews N.S.W."/>
            <person name="McLaren S."/>
            <person name="Milne S."/>
            <person name="Mistry S."/>
            <person name="Moore M.J.F."/>
            <person name="Nickerson T."/>
            <person name="O'Dell C.N."/>
            <person name="Oliver K."/>
            <person name="Palmeiri A."/>
            <person name="Palmer S.A."/>
            <person name="Parker A."/>
            <person name="Patel D."/>
            <person name="Pearce A.V."/>
            <person name="Peck A.I."/>
            <person name="Pelan S."/>
            <person name="Phelps K."/>
            <person name="Phillimore B.J."/>
            <person name="Plumb R."/>
            <person name="Rajan J."/>
            <person name="Raymond C."/>
            <person name="Rouse G."/>
            <person name="Saenphimmachak C."/>
            <person name="Sehra H.K."/>
            <person name="Sheridan E."/>
            <person name="Shownkeen R."/>
            <person name="Sims S."/>
            <person name="Skuce C.D."/>
            <person name="Smith M."/>
            <person name="Steward C."/>
            <person name="Subramanian S."/>
            <person name="Sycamore N."/>
            <person name="Tracey A."/>
            <person name="Tromans A."/>
            <person name="Van Helmond Z."/>
            <person name="Wall M."/>
            <person name="Wallis J.M."/>
            <person name="White S."/>
            <person name="Whitehead S.L."/>
            <person name="Wilkinson J.E."/>
            <person name="Willey D.L."/>
            <person name="Williams H."/>
            <person name="Wilming L."/>
            <person name="Wray P.W."/>
            <person name="Wu Z."/>
            <person name="Coulson A."/>
            <person name="Vaudin M."/>
            <person name="Sulston J.E."/>
            <person name="Durbin R.M."/>
            <person name="Hubbard T."/>
            <person name="Wooster R."/>
            <person name="Dunham I."/>
            <person name="Carter N.P."/>
            <person name="McVean G."/>
            <person name="Ross M.T."/>
            <person name="Harrow J."/>
            <person name="Olson M.V."/>
            <person name="Beck S."/>
            <person name="Rogers J."/>
            <person name="Bentley D.R."/>
        </authorList>
    </citation>
    <scope>NUCLEOTIDE SEQUENCE [LARGE SCALE GENOMIC DNA]</scope>
</reference>
<reference key="9">
    <citation type="submission" date="2005-07" db="EMBL/GenBank/DDBJ databases">
        <authorList>
            <person name="Mural R.J."/>
            <person name="Istrail S."/>
            <person name="Sutton G.G."/>
            <person name="Florea L."/>
            <person name="Halpern A.L."/>
            <person name="Mobarry C.M."/>
            <person name="Lippert R."/>
            <person name="Walenz B."/>
            <person name="Shatkay H."/>
            <person name="Dew I."/>
            <person name="Miller J.R."/>
            <person name="Flanigan M.J."/>
            <person name="Edwards N.J."/>
            <person name="Bolanos R."/>
            <person name="Fasulo D."/>
            <person name="Halldorsson B.V."/>
            <person name="Hannenhalli S."/>
            <person name="Turner R."/>
            <person name="Yooseph S."/>
            <person name="Lu F."/>
            <person name="Nusskern D.R."/>
            <person name="Shue B.C."/>
            <person name="Zheng X.H."/>
            <person name="Zhong F."/>
            <person name="Delcher A.L."/>
            <person name="Huson D.H."/>
            <person name="Kravitz S.A."/>
            <person name="Mouchard L."/>
            <person name="Reinert K."/>
            <person name="Remington K.A."/>
            <person name="Clark A.G."/>
            <person name="Waterman M.S."/>
            <person name="Eichler E.E."/>
            <person name="Adams M.D."/>
            <person name="Hunkapiller M.W."/>
            <person name="Myers E.W."/>
            <person name="Venter J.C."/>
        </authorList>
    </citation>
    <scope>NUCLEOTIDE SEQUENCE [LARGE SCALE GENOMIC DNA]</scope>
</reference>
<reference key="10">
    <citation type="journal article" date="2004" name="Genome Res.">
        <title>The status, quality, and expansion of the NIH full-length cDNA project: the Mammalian Gene Collection (MGC).</title>
        <authorList>
            <consortium name="The MGC Project Team"/>
        </authorList>
    </citation>
    <scope>NUCLEOTIDE SEQUENCE [LARGE SCALE MRNA]</scope>
    <source>
        <tissue>Kidney</tissue>
    </source>
</reference>
<reference key="11">
    <citation type="journal article" date="2008" name="Proc. Natl. Acad. Sci. U.S.A.">
        <title>A quantitative atlas of mitotic phosphorylation.</title>
        <authorList>
            <person name="Dephoure N."/>
            <person name="Zhou C."/>
            <person name="Villen J."/>
            <person name="Beausoleil S.A."/>
            <person name="Bakalarski C.E."/>
            <person name="Elledge S.J."/>
            <person name="Gygi S.P."/>
        </authorList>
    </citation>
    <scope>PHOSPHORYLATION [LARGE SCALE ANALYSIS] AT SER-137</scope>
    <scope>IDENTIFICATION BY MASS SPECTROMETRY [LARGE SCALE ANALYSIS]</scope>
    <source>
        <tissue>Cervix carcinoma</tissue>
    </source>
</reference>
<reference key="12">
    <citation type="journal article" date="2009" name="Sci. Signal.">
        <title>Quantitative phosphoproteomic analysis of T cell receptor signaling reveals system-wide modulation of protein-protein interactions.</title>
        <authorList>
            <person name="Mayya V."/>
            <person name="Lundgren D.H."/>
            <person name="Hwang S.-I."/>
            <person name="Rezaul K."/>
            <person name="Wu L."/>
            <person name="Eng J.K."/>
            <person name="Rodionov V."/>
            <person name="Han D.K."/>
        </authorList>
    </citation>
    <scope>PHOSPHORYLATION [LARGE SCALE ANALYSIS] AT SER-137</scope>
    <scope>IDENTIFICATION BY MASS SPECTROMETRY [LARGE SCALE ANALYSIS]</scope>
    <source>
        <tissue>Leukemic T-cell</tissue>
    </source>
</reference>
<reference key="13">
    <citation type="journal article" date="2010" name="Sci. Signal.">
        <title>Quantitative phosphoproteomics reveals widespread full phosphorylation site occupancy during mitosis.</title>
        <authorList>
            <person name="Olsen J.V."/>
            <person name="Vermeulen M."/>
            <person name="Santamaria A."/>
            <person name="Kumar C."/>
            <person name="Miller M.L."/>
            <person name="Jensen L.J."/>
            <person name="Gnad F."/>
            <person name="Cox J."/>
            <person name="Jensen T.S."/>
            <person name="Nigg E.A."/>
            <person name="Brunak S."/>
            <person name="Mann M."/>
        </authorList>
    </citation>
    <scope>PHOSPHORYLATION [LARGE SCALE ANALYSIS] AT SER-137</scope>
    <scope>IDENTIFICATION BY MASS SPECTROMETRY [LARGE SCALE ANALYSIS]</scope>
    <source>
        <tissue>Cervix carcinoma</tissue>
    </source>
</reference>
<reference key="14">
    <citation type="journal article" date="2011" name="BMC Syst. Biol.">
        <title>Initial characterization of the human central proteome.</title>
        <authorList>
            <person name="Burkard T.R."/>
            <person name="Planyavsky M."/>
            <person name="Kaupe I."/>
            <person name="Breitwieser F.P."/>
            <person name="Buerckstuemmer T."/>
            <person name="Bennett K.L."/>
            <person name="Superti-Furga G."/>
            <person name="Colinge J."/>
        </authorList>
    </citation>
    <scope>IDENTIFICATION BY MASS SPECTROMETRY [LARGE SCALE ANALYSIS]</scope>
</reference>
<reference key="15">
    <citation type="journal article" date="2011" name="Sci. Signal.">
        <title>System-wide temporal characterization of the proteome and phosphoproteome of human embryonic stem cell differentiation.</title>
        <authorList>
            <person name="Rigbolt K.T."/>
            <person name="Prokhorova T.A."/>
            <person name="Akimov V."/>
            <person name="Henningsen J."/>
            <person name="Johansen P.T."/>
            <person name="Kratchmarova I."/>
            <person name="Kassem M."/>
            <person name="Mann M."/>
            <person name="Olsen J.V."/>
            <person name="Blagoev B."/>
        </authorList>
    </citation>
    <scope>PHOSPHORYLATION [LARGE SCALE ANALYSIS] AT SER-137</scope>
    <scope>IDENTIFICATION BY MASS SPECTROMETRY [LARGE SCALE ANALYSIS]</scope>
</reference>
<reference key="16">
    <citation type="journal article" date="2013" name="J. Proteome Res.">
        <title>Toward a comprehensive characterization of a human cancer cell phosphoproteome.</title>
        <authorList>
            <person name="Zhou H."/>
            <person name="Di Palma S."/>
            <person name="Preisinger C."/>
            <person name="Peng M."/>
            <person name="Polat A.N."/>
            <person name="Heck A.J."/>
            <person name="Mohammed S."/>
        </authorList>
    </citation>
    <scope>PHOSPHORYLATION [LARGE SCALE ANALYSIS] AT SER-137 AND SER-144</scope>
    <scope>IDENTIFICATION BY MASS SPECTROMETRY [LARGE SCALE ANALYSIS]</scope>
    <source>
        <tissue>Cervix carcinoma</tissue>
        <tissue>Erythroleukemia</tissue>
    </source>
</reference>
<reference key="17">
    <citation type="journal article" date="2018" name="Nat. Cell Biol.">
        <title>TMEM9 promotes intestinal tumorigenesis through vacuolar-ATPase-activated Wnt/beta-catenin signalling.</title>
        <authorList>
            <person name="Jung Y.S."/>
            <person name="Jun S."/>
            <person name="Kim M.J."/>
            <person name="Lee S.H."/>
            <person name="Suh H.N."/>
            <person name="Lien E.M."/>
            <person name="Jung H.Y."/>
            <person name="Lee S."/>
            <person name="Zhang J."/>
            <person name="Yang J.I."/>
            <person name="Ji H."/>
            <person name="Wu J.Y."/>
            <person name="Wang W."/>
            <person name="Miller R.K."/>
            <person name="Chen J."/>
            <person name="McCrea P.D."/>
            <person name="Kopetz S."/>
            <person name="Park J.I."/>
        </authorList>
    </citation>
    <scope>FUNCTION</scope>
    <scope>INTERACTION WITH ATP6AP2 AND ATP6V0D1</scope>
    <scope>SUBCELLULAR LOCATION</scope>
    <scope>TISSUE SPECIFICITY</scope>
    <scope>DOMAIN</scope>
</reference>
<reference key="18">
    <citation type="journal article" date="2021" name="Hepatology">
        <title>TMEM9-v-ATPase Activates Wnt/beta-Catenin Signaling via APC Lysosomal Degradation for Liver Regeneration and Tumorigenesis.</title>
        <authorList>
            <person name="Jung Y.S."/>
            <person name="Stratton S.A."/>
            <person name="Lee S.H."/>
            <person name="Kim M.J."/>
            <person name="Jun S."/>
            <person name="Zhang J."/>
            <person name="Zheng B."/>
            <person name="Cervantes C.L."/>
            <person name="Cha J.H."/>
            <person name="Barton M.C."/>
            <person name="Park J.I."/>
        </authorList>
    </citation>
    <scope>FUNCTION</scope>
</reference>
<name>TMEM9_HUMAN</name>
<dbReference type="EMBL" id="AY138587">
    <property type="protein sequence ID" value="AAN15925.1"/>
    <property type="molecule type" value="mRNA"/>
</dbReference>
<dbReference type="EMBL" id="AB013909">
    <property type="protein sequence ID" value="BAB87799.1"/>
    <property type="molecule type" value="mRNA"/>
</dbReference>
<dbReference type="EMBL" id="AF151020">
    <property type="protein sequence ID" value="AAF36106.1"/>
    <property type="molecule type" value="mRNA"/>
</dbReference>
<dbReference type="EMBL" id="AL136600">
    <property type="protein sequence ID" value="CAB66535.1"/>
    <property type="molecule type" value="mRNA"/>
</dbReference>
<dbReference type="EMBL" id="AY359012">
    <property type="protein sequence ID" value="AAQ89371.1"/>
    <property type="molecule type" value="mRNA"/>
</dbReference>
<dbReference type="EMBL" id="AK054883">
    <property type="protein sequence ID" value="BAB70820.1"/>
    <property type="molecule type" value="mRNA"/>
</dbReference>
<dbReference type="EMBL" id="AK075335">
    <property type="protein sequence ID" value="BAC11554.1"/>
    <property type="molecule type" value="mRNA"/>
</dbReference>
<dbReference type="EMBL" id="AL139159">
    <property type="status" value="NOT_ANNOTATED_CDS"/>
    <property type="molecule type" value="Genomic_DNA"/>
</dbReference>
<dbReference type="EMBL" id="CH471067">
    <property type="protein sequence ID" value="EAW91338.1"/>
    <property type="molecule type" value="Genomic_DNA"/>
</dbReference>
<dbReference type="EMBL" id="BC001106">
    <property type="protein sequence ID" value="AAH01106.1"/>
    <property type="molecule type" value="mRNA"/>
</dbReference>
<dbReference type="CCDS" id="CCDS1408.1"/>
<dbReference type="RefSeq" id="NP_001275493.1">
    <property type="nucleotide sequence ID" value="NM_001288564.2"/>
</dbReference>
<dbReference type="RefSeq" id="NP_001275494.1">
    <property type="nucleotide sequence ID" value="NM_001288565.2"/>
</dbReference>
<dbReference type="RefSeq" id="NP_001275495.1">
    <property type="nucleotide sequence ID" value="NM_001288566.2"/>
</dbReference>
<dbReference type="RefSeq" id="NP_001275496.1">
    <property type="nucleotide sequence ID" value="NM_001288567.2"/>
</dbReference>
<dbReference type="RefSeq" id="NP_001275497.1">
    <property type="nucleotide sequence ID" value="NM_001288568.2"/>
</dbReference>
<dbReference type="RefSeq" id="NP_001275498.1">
    <property type="nucleotide sequence ID" value="NM_001288569.2"/>
</dbReference>
<dbReference type="RefSeq" id="NP_001275499.1">
    <property type="nucleotide sequence ID" value="NM_001288570.1"/>
</dbReference>
<dbReference type="RefSeq" id="NP_001275500.1">
    <property type="nucleotide sequence ID" value="NM_001288571.1"/>
</dbReference>
<dbReference type="RefSeq" id="NP_057540.1">
    <property type="nucleotide sequence ID" value="NM_016456.5"/>
</dbReference>
<dbReference type="RefSeq" id="XP_011507687.1">
    <property type="nucleotide sequence ID" value="XM_011509385.1"/>
</dbReference>
<dbReference type="RefSeq" id="XP_011507688.1">
    <property type="nucleotide sequence ID" value="XM_011509386.2"/>
</dbReference>
<dbReference type="RefSeq" id="XP_011507689.1">
    <property type="nucleotide sequence ID" value="XM_011509387.2"/>
</dbReference>
<dbReference type="BioGRID" id="128927">
    <property type="interactions" value="274"/>
</dbReference>
<dbReference type="FunCoup" id="Q9P0T7">
    <property type="interactions" value="1403"/>
</dbReference>
<dbReference type="IntAct" id="Q9P0T7">
    <property type="interactions" value="178"/>
</dbReference>
<dbReference type="MINT" id="Q9P0T7"/>
<dbReference type="STRING" id="9606.ENSP00000356301"/>
<dbReference type="TCDB" id="8.A.123.1.1">
    <property type="family name" value="the cytokine expression and secretion mediator and v-type atpase regulator, tmem9 (tmem9) family"/>
</dbReference>
<dbReference type="GlyConnect" id="1857">
    <property type="glycosylation" value="1 N-Linked glycan (1 site)"/>
</dbReference>
<dbReference type="GlyCosmos" id="Q9P0T7">
    <property type="glycosylation" value="4 sites, 2 glycans"/>
</dbReference>
<dbReference type="GlyGen" id="Q9P0T7">
    <property type="glycosylation" value="6 sites, 3 N-linked glycans (2 sites), 1 O-linked glycan (2 sites)"/>
</dbReference>
<dbReference type="iPTMnet" id="Q9P0T7"/>
<dbReference type="PhosphoSitePlus" id="Q9P0T7"/>
<dbReference type="BioMuta" id="TMEM9"/>
<dbReference type="DMDM" id="20532090"/>
<dbReference type="jPOST" id="Q9P0T7"/>
<dbReference type="MassIVE" id="Q9P0T7"/>
<dbReference type="PaxDb" id="9606-ENSP00000356301"/>
<dbReference type="PeptideAtlas" id="Q9P0T7"/>
<dbReference type="ProteomicsDB" id="83596"/>
<dbReference type="Pumba" id="Q9P0T7"/>
<dbReference type="Antibodypedia" id="34497">
    <property type="antibodies" value="62 antibodies from 19 providers"/>
</dbReference>
<dbReference type="DNASU" id="252839"/>
<dbReference type="Ensembl" id="ENST00000367330.6">
    <property type="protein sequence ID" value="ENSP00000356299.1"/>
    <property type="gene ID" value="ENSG00000116857.17"/>
</dbReference>
<dbReference type="Ensembl" id="ENST00000367333.6">
    <property type="protein sequence ID" value="ENSP00000356302.2"/>
    <property type="gene ID" value="ENSG00000116857.17"/>
</dbReference>
<dbReference type="Ensembl" id="ENST00000367334.9">
    <property type="protein sequence ID" value="ENSP00000356303.5"/>
    <property type="gene ID" value="ENSG00000116857.17"/>
</dbReference>
<dbReference type="Ensembl" id="ENST00000485839.6">
    <property type="protein sequence ID" value="ENSP00000476893.1"/>
    <property type="gene ID" value="ENSG00000116857.17"/>
</dbReference>
<dbReference type="GeneID" id="252839"/>
<dbReference type="KEGG" id="hsa:252839"/>
<dbReference type="MANE-Select" id="ENST00000367330.6">
    <property type="protein sequence ID" value="ENSP00000356299.1"/>
    <property type="RefSeq nucleotide sequence ID" value="NM_001288565.2"/>
    <property type="RefSeq protein sequence ID" value="NP_001275494.1"/>
</dbReference>
<dbReference type="UCSC" id="uc001gvx.5">
    <property type="organism name" value="human"/>
</dbReference>
<dbReference type="AGR" id="HGNC:18823"/>
<dbReference type="CTD" id="252839"/>
<dbReference type="DisGeNET" id="252839"/>
<dbReference type="GeneCards" id="TMEM9"/>
<dbReference type="HGNC" id="HGNC:18823">
    <property type="gene designation" value="TMEM9"/>
</dbReference>
<dbReference type="HPA" id="ENSG00000116857">
    <property type="expression patterns" value="Low tissue specificity"/>
</dbReference>
<dbReference type="MIM" id="616877">
    <property type="type" value="gene"/>
</dbReference>
<dbReference type="neXtProt" id="NX_Q9P0T7"/>
<dbReference type="OpenTargets" id="ENSG00000116857"/>
<dbReference type="PharmGKB" id="PA38696"/>
<dbReference type="VEuPathDB" id="HostDB:ENSG00000116857"/>
<dbReference type="eggNOG" id="KOG4007">
    <property type="taxonomic scope" value="Eukaryota"/>
</dbReference>
<dbReference type="GeneTree" id="ENSGT00390000000819"/>
<dbReference type="HOGENOM" id="CLU_093267_2_0_1"/>
<dbReference type="InParanoid" id="Q9P0T7"/>
<dbReference type="OMA" id="QCTWKCA"/>
<dbReference type="OrthoDB" id="10059035at2759"/>
<dbReference type="PAN-GO" id="Q9P0T7">
    <property type="GO annotations" value="0 GO annotations based on evolutionary models"/>
</dbReference>
<dbReference type="PhylomeDB" id="Q9P0T7"/>
<dbReference type="TreeFam" id="TF315146"/>
<dbReference type="PathwayCommons" id="Q9P0T7"/>
<dbReference type="SignaLink" id="Q9P0T7"/>
<dbReference type="BioGRID-ORCS" id="252839">
    <property type="hits" value="14 hits in 1170 CRISPR screens"/>
</dbReference>
<dbReference type="ChiTaRS" id="TMEM9">
    <property type="organism name" value="human"/>
</dbReference>
<dbReference type="GeneWiki" id="TMEM9"/>
<dbReference type="GenomeRNAi" id="252839"/>
<dbReference type="Pharos" id="Q9P0T7">
    <property type="development level" value="Tbio"/>
</dbReference>
<dbReference type="PRO" id="PR:Q9P0T7"/>
<dbReference type="Proteomes" id="UP000005640">
    <property type="component" value="Chromosome 1"/>
</dbReference>
<dbReference type="RNAct" id="Q9P0T7">
    <property type="molecule type" value="protein"/>
</dbReference>
<dbReference type="Bgee" id="ENSG00000116857">
    <property type="expression patterns" value="Expressed in cingulate cortex and 186 other cell types or tissues"/>
</dbReference>
<dbReference type="ExpressionAtlas" id="Q9P0T7">
    <property type="expression patterns" value="baseline and differential"/>
</dbReference>
<dbReference type="GO" id="GO:0045171">
    <property type="term" value="C:intercellular bridge"/>
    <property type="evidence" value="ECO:0000314"/>
    <property type="project" value="HPA"/>
</dbReference>
<dbReference type="GO" id="GO:0043231">
    <property type="term" value="C:intracellular membrane-bounded organelle"/>
    <property type="evidence" value="ECO:0000314"/>
    <property type="project" value="HPA"/>
</dbReference>
<dbReference type="GO" id="GO:0005770">
    <property type="term" value="C:late endosome"/>
    <property type="evidence" value="ECO:0000314"/>
    <property type="project" value="UniProtKB"/>
</dbReference>
<dbReference type="GO" id="GO:0005765">
    <property type="term" value="C:lysosomal membrane"/>
    <property type="evidence" value="ECO:0000314"/>
    <property type="project" value="UniProtKB"/>
</dbReference>
<dbReference type="GO" id="GO:0005764">
    <property type="term" value="C:lysosome"/>
    <property type="evidence" value="ECO:0000314"/>
    <property type="project" value="UniProtKB"/>
</dbReference>
<dbReference type="GO" id="GO:0015630">
    <property type="term" value="C:microtubule cytoskeleton"/>
    <property type="evidence" value="ECO:0000314"/>
    <property type="project" value="HPA"/>
</dbReference>
<dbReference type="GO" id="GO:0072686">
    <property type="term" value="C:mitotic spindle"/>
    <property type="evidence" value="ECO:0000314"/>
    <property type="project" value="HPA"/>
</dbReference>
<dbReference type="GO" id="GO:0032585">
    <property type="term" value="C:multivesicular body membrane"/>
    <property type="evidence" value="ECO:0000314"/>
    <property type="project" value="UniProtKB"/>
</dbReference>
<dbReference type="GO" id="GO:0048388">
    <property type="term" value="P:endosomal lumen acidification"/>
    <property type="evidence" value="ECO:0000314"/>
    <property type="project" value="UniProtKB"/>
</dbReference>
<dbReference type="GO" id="GO:0007042">
    <property type="term" value="P:lysosomal lumen acidification"/>
    <property type="evidence" value="ECO:0000314"/>
    <property type="project" value="UniProtKB"/>
</dbReference>
<dbReference type="GO" id="GO:0090263">
    <property type="term" value="P:positive regulation of canonical Wnt signaling pathway"/>
    <property type="evidence" value="ECO:0000314"/>
    <property type="project" value="UniProtKB"/>
</dbReference>
<dbReference type="GO" id="GO:0015031">
    <property type="term" value="P:protein transport"/>
    <property type="evidence" value="ECO:0007669"/>
    <property type="project" value="UniProtKB-KW"/>
</dbReference>
<dbReference type="GO" id="GO:0070070">
    <property type="term" value="P:proton-transporting V-type ATPase complex assembly"/>
    <property type="evidence" value="ECO:0000314"/>
    <property type="project" value="UniProtKB"/>
</dbReference>
<dbReference type="GO" id="GO:0042176">
    <property type="term" value="P:regulation of protein catabolic process"/>
    <property type="evidence" value="ECO:0000250"/>
    <property type="project" value="UniProtKB"/>
</dbReference>
<dbReference type="InterPro" id="IPR008853">
    <property type="entry name" value="TMEM9/TMEM9B"/>
</dbReference>
<dbReference type="PANTHER" id="PTHR13064:SF1">
    <property type="entry name" value="PROTON-TRANSPORTING V-TYPE ATPASE COMPLEX ASSEMBLY REGULATOR TMEM9"/>
    <property type="match status" value="1"/>
</dbReference>
<dbReference type="PANTHER" id="PTHR13064">
    <property type="entry name" value="TRANSMEMBRANE PROTEIN 9 FAMILY MEMBER"/>
    <property type="match status" value="1"/>
</dbReference>
<dbReference type="Pfam" id="PF05434">
    <property type="entry name" value="Tmemb_9"/>
    <property type="match status" value="1"/>
</dbReference>